<feature type="chain" id="PRO_0000256936" description="Chaperonin GroEL 1">
    <location>
        <begin position="1"/>
        <end position="542"/>
    </location>
</feature>
<feature type="binding site" evidence="1">
    <location>
        <begin position="30"/>
        <end position="33"/>
    </location>
    <ligand>
        <name>ATP</name>
        <dbReference type="ChEBI" id="CHEBI:30616"/>
    </ligand>
</feature>
<feature type="binding site" evidence="1">
    <location>
        <position position="51"/>
    </location>
    <ligand>
        <name>ATP</name>
        <dbReference type="ChEBI" id="CHEBI:30616"/>
    </ligand>
</feature>
<feature type="binding site" evidence="1">
    <location>
        <begin position="87"/>
        <end position="91"/>
    </location>
    <ligand>
        <name>ATP</name>
        <dbReference type="ChEBI" id="CHEBI:30616"/>
    </ligand>
</feature>
<feature type="binding site" evidence="1">
    <location>
        <position position="415"/>
    </location>
    <ligand>
        <name>ATP</name>
        <dbReference type="ChEBI" id="CHEBI:30616"/>
    </ligand>
</feature>
<feature type="binding site" evidence="1">
    <location>
        <begin position="480"/>
        <end position="482"/>
    </location>
    <ligand>
        <name>ATP</name>
        <dbReference type="ChEBI" id="CHEBI:30616"/>
    </ligand>
</feature>
<feature type="binding site" evidence="1">
    <location>
        <position position="496"/>
    </location>
    <ligand>
        <name>ATP</name>
        <dbReference type="ChEBI" id="CHEBI:30616"/>
    </ligand>
</feature>
<evidence type="ECO:0000255" key="1">
    <source>
        <dbReference type="HAMAP-Rule" id="MF_00600"/>
    </source>
</evidence>
<keyword id="KW-0067">ATP-binding</keyword>
<keyword id="KW-0143">Chaperone</keyword>
<keyword id="KW-0963">Cytoplasm</keyword>
<keyword id="KW-0413">Isomerase</keyword>
<keyword id="KW-0547">Nucleotide-binding</keyword>
<keyword id="KW-1185">Reference proteome</keyword>
<reference key="1">
    <citation type="journal article" date="2006" name="Appl. Environ. Microbiol.">
        <title>Genome sequence of the chemolithoautotrophic nitrite-oxidizing bacterium Nitrobacter winogradskyi Nb-255.</title>
        <authorList>
            <person name="Starkenburg S.R."/>
            <person name="Chain P.S.G."/>
            <person name="Sayavedra-Soto L.A."/>
            <person name="Hauser L."/>
            <person name="Land M.L."/>
            <person name="Larimer F.W."/>
            <person name="Malfatti S.A."/>
            <person name="Klotz M.G."/>
            <person name="Bottomley P.J."/>
            <person name="Arp D.J."/>
            <person name="Hickey W.J."/>
        </authorList>
    </citation>
    <scope>NUCLEOTIDE SEQUENCE [LARGE SCALE GENOMIC DNA]</scope>
    <source>
        <strain>ATCC 25391 / DSM 10237 / CIP 104748 / NCIMB 11846 / Nb-255</strain>
    </source>
</reference>
<dbReference type="EC" id="5.6.1.7" evidence="1"/>
<dbReference type="EMBL" id="CP000115">
    <property type="protein sequence ID" value="ABA05368.1"/>
    <property type="molecule type" value="Genomic_DNA"/>
</dbReference>
<dbReference type="RefSeq" id="WP_011315341.1">
    <property type="nucleotide sequence ID" value="NC_007406.1"/>
</dbReference>
<dbReference type="SMR" id="Q3SQS3"/>
<dbReference type="STRING" id="323098.Nwi_2113"/>
<dbReference type="KEGG" id="nwi:Nwi_2113"/>
<dbReference type="eggNOG" id="COG0459">
    <property type="taxonomic scope" value="Bacteria"/>
</dbReference>
<dbReference type="HOGENOM" id="CLU_016503_3_0_5"/>
<dbReference type="OrthoDB" id="9766614at2"/>
<dbReference type="Proteomes" id="UP000002531">
    <property type="component" value="Chromosome"/>
</dbReference>
<dbReference type="GO" id="GO:0005737">
    <property type="term" value="C:cytoplasm"/>
    <property type="evidence" value="ECO:0007669"/>
    <property type="project" value="UniProtKB-SubCell"/>
</dbReference>
<dbReference type="GO" id="GO:0005524">
    <property type="term" value="F:ATP binding"/>
    <property type="evidence" value="ECO:0007669"/>
    <property type="project" value="UniProtKB-UniRule"/>
</dbReference>
<dbReference type="GO" id="GO:0140662">
    <property type="term" value="F:ATP-dependent protein folding chaperone"/>
    <property type="evidence" value="ECO:0007669"/>
    <property type="project" value="InterPro"/>
</dbReference>
<dbReference type="GO" id="GO:0016853">
    <property type="term" value="F:isomerase activity"/>
    <property type="evidence" value="ECO:0007669"/>
    <property type="project" value="UniProtKB-KW"/>
</dbReference>
<dbReference type="GO" id="GO:0051082">
    <property type="term" value="F:unfolded protein binding"/>
    <property type="evidence" value="ECO:0007669"/>
    <property type="project" value="UniProtKB-UniRule"/>
</dbReference>
<dbReference type="GO" id="GO:0042026">
    <property type="term" value="P:protein refolding"/>
    <property type="evidence" value="ECO:0007669"/>
    <property type="project" value="UniProtKB-UniRule"/>
</dbReference>
<dbReference type="CDD" id="cd03344">
    <property type="entry name" value="GroEL"/>
    <property type="match status" value="1"/>
</dbReference>
<dbReference type="FunFam" id="1.10.560.10:FF:000001">
    <property type="entry name" value="60 kDa chaperonin"/>
    <property type="match status" value="1"/>
</dbReference>
<dbReference type="FunFam" id="3.50.7.10:FF:000001">
    <property type="entry name" value="60 kDa chaperonin"/>
    <property type="match status" value="1"/>
</dbReference>
<dbReference type="Gene3D" id="3.50.7.10">
    <property type="entry name" value="GroEL"/>
    <property type="match status" value="1"/>
</dbReference>
<dbReference type="Gene3D" id="1.10.560.10">
    <property type="entry name" value="GroEL-like equatorial domain"/>
    <property type="match status" value="1"/>
</dbReference>
<dbReference type="Gene3D" id="3.30.260.10">
    <property type="entry name" value="TCP-1-like chaperonin intermediate domain"/>
    <property type="match status" value="1"/>
</dbReference>
<dbReference type="HAMAP" id="MF_00600">
    <property type="entry name" value="CH60"/>
    <property type="match status" value="1"/>
</dbReference>
<dbReference type="InterPro" id="IPR018370">
    <property type="entry name" value="Chaperonin_Cpn60_CS"/>
</dbReference>
<dbReference type="InterPro" id="IPR001844">
    <property type="entry name" value="Cpn60/GroEL"/>
</dbReference>
<dbReference type="InterPro" id="IPR002423">
    <property type="entry name" value="Cpn60/GroEL/TCP-1"/>
</dbReference>
<dbReference type="InterPro" id="IPR027409">
    <property type="entry name" value="GroEL-like_apical_dom_sf"/>
</dbReference>
<dbReference type="InterPro" id="IPR027413">
    <property type="entry name" value="GROEL-like_equatorial_sf"/>
</dbReference>
<dbReference type="InterPro" id="IPR027410">
    <property type="entry name" value="TCP-1-like_intermed_sf"/>
</dbReference>
<dbReference type="NCBIfam" id="TIGR02348">
    <property type="entry name" value="GroEL"/>
    <property type="match status" value="1"/>
</dbReference>
<dbReference type="NCBIfam" id="NF000592">
    <property type="entry name" value="PRK00013.1"/>
    <property type="match status" value="1"/>
</dbReference>
<dbReference type="NCBIfam" id="NF009487">
    <property type="entry name" value="PRK12849.1"/>
    <property type="match status" value="1"/>
</dbReference>
<dbReference type="NCBIfam" id="NF009488">
    <property type="entry name" value="PRK12850.1"/>
    <property type="match status" value="1"/>
</dbReference>
<dbReference type="NCBIfam" id="NF009489">
    <property type="entry name" value="PRK12851.1"/>
    <property type="match status" value="1"/>
</dbReference>
<dbReference type="PANTHER" id="PTHR45633">
    <property type="entry name" value="60 KDA HEAT SHOCK PROTEIN, MITOCHONDRIAL"/>
    <property type="match status" value="1"/>
</dbReference>
<dbReference type="Pfam" id="PF00118">
    <property type="entry name" value="Cpn60_TCP1"/>
    <property type="match status" value="1"/>
</dbReference>
<dbReference type="PRINTS" id="PR00298">
    <property type="entry name" value="CHAPERONIN60"/>
</dbReference>
<dbReference type="SUPFAM" id="SSF52029">
    <property type="entry name" value="GroEL apical domain-like"/>
    <property type="match status" value="1"/>
</dbReference>
<dbReference type="SUPFAM" id="SSF48592">
    <property type="entry name" value="GroEL equatorial domain-like"/>
    <property type="match status" value="1"/>
</dbReference>
<dbReference type="SUPFAM" id="SSF54849">
    <property type="entry name" value="GroEL-intermediate domain like"/>
    <property type="match status" value="1"/>
</dbReference>
<dbReference type="PROSITE" id="PS00296">
    <property type="entry name" value="CHAPERONINS_CPN60"/>
    <property type="match status" value="1"/>
</dbReference>
<gene>
    <name evidence="1" type="primary">groEL1</name>
    <name evidence="1" type="synonym">groL1</name>
    <name type="ordered locus">Nwi_2113</name>
</gene>
<accession>Q3SQS3</accession>
<comment type="function">
    <text evidence="1">Together with its co-chaperonin GroES, plays an essential role in assisting protein folding. The GroEL-GroES system forms a nano-cage that allows encapsulation of the non-native substrate proteins and provides a physical environment optimized to promote and accelerate protein folding.</text>
</comment>
<comment type="catalytic activity">
    <reaction evidence="1">
        <text>ATP + H2O + a folded polypeptide = ADP + phosphate + an unfolded polypeptide.</text>
        <dbReference type="EC" id="5.6.1.7"/>
    </reaction>
</comment>
<comment type="subunit">
    <text evidence="1">Forms a cylinder of 14 subunits composed of two heptameric rings stacked back-to-back. Interacts with the co-chaperonin GroES.</text>
</comment>
<comment type="subcellular location">
    <subcellularLocation>
        <location evidence="1">Cytoplasm</location>
    </subcellularLocation>
</comment>
<comment type="similarity">
    <text evidence="1">Belongs to the chaperonin (HSP60) family.</text>
</comment>
<protein>
    <recommendedName>
        <fullName evidence="1">Chaperonin GroEL 1</fullName>
        <ecNumber evidence="1">5.6.1.7</ecNumber>
    </recommendedName>
    <alternativeName>
        <fullName evidence="1">60 kDa chaperonin 1</fullName>
    </alternativeName>
    <alternativeName>
        <fullName evidence="1">Chaperonin-60 1</fullName>
        <shortName evidence="1">Cpn60 1</shortName>
    </alternativeName>
</protein>
<sequence length="542" mass="57694">MAAKEVRFSSDAREKMLRGVDTLANAVKVTLGPKGRNVVIEKSFGAPRITKDGVTVAKEIELDDKFENMGAQMVREVASKTNDLAGDGTTTATVLAQAIVKEGAKAVAAGMNPMDLKRGIDLAVEAVVKDLTKNAKKITSNSEIAQVATISANGDTEIGRFLAEAMQKVGNEGVITVEEAKSLETELEVVEGMQFDRGYVSPYFVTDAEKMRVEFEDPYVLIHEKKLSGLQAMVPLLESVVQSGKPLLVIAEDVEGEALATLVVNKLRGGLKVAAVKAPGFGDRRKAMLEDIAILTGGTAISEDLGIKLENVTLNMLGRAKKVVIDKENTTIVDGAGRKKDIEARVTQIKAQIEETTSDYDREKLQERLAKLAGGVAVIRVGGATEVEVKERKDRVDDAMHATRAAVEEGILPGGGVALLRALKALDAVKPDNPDQKAGVDIVRRAIQVPARQIIQNAGEDGSLVVGKLLEKNTYNWGFNAATGEYQDLVGVGVIDPAKVVRTALQDAASVASLLITTEALVAEKPKKDVAPALPPGGGMDF</sequence>
<name>CH601_NITWN</name>
<proteinExistence type="inferred from homology"/>
<organism>
    <name type="scientific">Nitrobacter winogradskyi (strain ATCC 25391 / DSM 10237 / CIP 104748 / NCIMB 11846 / Nb-255)</name>
    <dbReference type="NCBI Taxonomy" id="323098"/>
    <lineage>
        <taxon>Bacteria</taxon>
        <taxon>Pseudomonadati</taxon>
        <taxon>Pseudomonadota</taxon>
        <taxon>Alphaproteobacteria</taxon>
        <taxon>Hyphomicrobiales</taxon>
        <taxon>Nitrobacteraceae</taxon>
        <taxon>Nitrobacter</taxon>
    </lineage>
</organism>